<comment type="subcellular location">
    <subcellularLocation>
        <location evidence="1">Cytoplasm</location>
        <location evidence="1">Nucleoid</location>
    </subcellularLocation>
</comment>
<comment type="similarity">
    <text evidence="1">Belongs to the YejK family.</text>
</comment>
<evidence type="ECO:0000255" key="1">
    <source>
        <dbReference type="HAMAP-Rule" id="MF_00730"/>
    </source>
</evidence>
<accession>Q12LR1</accession>
<gene>
    <name type="ordered locus">Sden_2335</name>
</gene>
<keyword id="KW-0963">Cytoplasm</keyword>
<keyword id="KW-1185">Reference proteome</keyword>
<reference key="1">
    <citation type="submission" date="2006-03" db="EMBL/GenBank/DDBJ databases">
        <title>Complete sequence of Shewanella denitrificans OS217.</title>
        <authorList>
            <consortium name="US DOE Joint Genome Institute"/>
            <person name="Copeland A."/>
            <person name="Lucas S."/>
            <person name="Lapidus A."/>
            <person name="Barry K."/>
            <person name="Detter J.C."/>
            <person name="Glavina del Rio T."/>
            <person name="Hammon N."/>
            <person name="Israni S."/>
            <person name="Dalin E."/>
            <person name="Tice H."/>
            <person name="Pitluck S."/>
            <person name="Brettin T."/>
            <person name="Bruce D."/>
            <person name="Han C."/>
            <person name="Tapia R."/>
            <person name="Gilna P."/>
            <person name="Kiss H."/>
            <person name="Schmutz J."/>
            <person name="Larimer F."/>
            <person name="Land M."/>
            <person name="Hauser L."/>
            <person name="Kyrpides N."/>
            <person name="Lykidis A."/>
            <person name="Richardson P."/>
        </authorList>
    </citation>
    <scope>NUCLEOTIDE SEQUENCE [LARGE SCALE GENOMIC DNA]</scope>
    <source>
        <strain>OS217 / ATCC BAA-1090 / DSM 15013</strain>
    </source>
</reference>
<proteinExistence type="inferred from homology"/>
<feature type="chain" id="PRO_1000045944" description="Nucleoid-associated protein Sden_2335">
    <location>
        <begin position="1"/>
        <end position="341"/>
    </location>
</feature>
<sequence length="341" mass="37757">MSINIEQAIIHEISQDSQGQLRCRLRPQPLLNSQAVEAMLEELHQTYSGKAGKGFGFFGTHGEDGEANPAFADGLSQYRSGDLGFVEFTGVASKLLQEELAKYDFSQGGFLLMSCYTSMTSDYLFVALLSAKSSMTVLDDMELSQNNHLDLNNIQLAARIDLTEWQADKDSRKYISFIRGRAGRKVADFFLDFMGCVEGVNIKAQNKTLMHAVEDFVSGSELTKDERQQCRDKVFDYCSERAEVGADIELKDLADELADSGMDSFYDFASSGTYELDEEFPADKASLRQLKKFSGTGGGVTLSFDGGHLGERVIYDPISDTLLIKGVPANLKDQLDRRLKG</sequence>
<protein>
    <recommendedName>
        <fullName evidence="1">Nucleoid-associated protein Sden_2335</fullName>
    </recommendedName>
</protein>
<organism>
    <name type="scientific">Shewanella denitrificans (strain OS217 / ATCC BAA-1090 / DSM 15013)</name>
    <dbReference type="NCBI Taxonomy" id="318161"/>
    <lineage>
        <taxon>Bacteria</taxon>
        <taxon>Pseudomonadati</taxon>
        <taxon>Pseudomonadota</taxon>
        <taxon>Gammaproteobacteria</taxon>
        <taxon>Alteromonadales</taxon>
        <taxon>Shewanellaceae</taxon>
        <taxon>Shewanella</taxon>
    </lineage>
</organism>
<name>NDPA_SHEDO</name>
<dbReference type="EMBL" id="CP000302">
    <property type="protein sequence ID" value="ABE55615.1"/>
    <property type="molecule type" value="Genomic_DNA"/>
</dbReference>
<dbReference type="RefSeq" id="WP_011496766.1">
    <property type="nucleotide sequence ID" value="NC_007954.1"/>
</dbReference>
<dbReference type="SMR" id="Q12LR1"/>
<dbReference type="STRING" id="318161.Sden_2335"/>
<dbReference type="KEGG" id="sdn:Sden_2335"/>
<dbReference type="eggNOG" id="COG3081">
    <property type="taxonomic scope" value="Bacteria"/>
</dbReference>
<dbReference type="HOGENOM" id="CLU_063050_0_1_6"/>
<dbReference type="OrthoDB" id="9131762at2"/>
<dbReference type="Proteomes" id="UP000001982">
    <property type="component" value="Chromosome"/>
</dbReference>
<dbReference type="GO" id="GO:0043590">
    <property type="term" value="C:bacterial nucleoid"/>
    <property type="evidence" value="ECO:0007669"/>
    <property type="project" value="TreeGrafter"/>
</dbReference>
<dbReference type="GO" id="GO:0005737">
    <property type="term" value="C:cytoplasm"/>
    <property type="evidence" value="ECO:0007669"/>
    <property type="project" value="UniProtKB-UniRule"/>
</dbReference>
<dbReference type="GO" id="GO:0003690">
    <property type="term" value="F:double-stranded DNA binding"/>
    <property type="evidence" value="ECO:0007669"/>
    <property type="project" value="TreeGrafter"/>
</dbReference>
<dbReference type="GO" id="GO:0003727">
    <property type="term" value="F:single-stranded RNA binding"/>
    <property type="evidence" value="ECO:0007669"/>
    <property type="project" value="TreeGrafter"/>
</dbReference>
<dbReference type="HAMAP" id="MF_00730">
    <property type="entry name" value="NdpA"/>
    <property type="match status" value="1"/>
</dbReference>
<dbReference type="InterPro" id="IPR007358">
    <property type="entry name" value="Nucleoid_associated_NdpA"/>
</dbReference>
<dbReference type="NCBIfam" id="NF001557">
    <property type="entry name" value="PRK00378.1"/>
    <property type="match status" value="1"/>
</dbReference>
<dbReference type="PANTHER" id="PTHR38772">
    <property type="match status" value="1"/>
</dbReference>
<dbReference type="PANTHER" id="PTHR38772:SF1">
    <property type="entry name" value="NUCLEOID-ASSOCIATED PROTEIN YEJK"/>
    <property type="match status" value="1"/>
</dbReference>
<dbReference type="Pfam" id="PF04245">
    <property type="entry name" value="NA37"/>
    <property type="match status" value="1"/>
</dbReference>